<proteinExistence type="inferred from homology"/>
<accession>A0RMP5</accession>
<evidence type="ECO:0000255" key="1">
    <source>
        <dbReference type="HAMAP-Rule" id="MF_01405"/>
    </source>
</evidence>
<feature type="chain" id="PRO_1000068411" description="dITP/XTP pyrophosphatase">
    <location>
        <begin position="1"/>
        <end position="204"/>
    </location>
</feature>
<feature type="active site" description="Proton acceptor" evidence="1">
    <location>
        <position position="74"/>
    </location>
</feature>
<feature type="binding site" evidence="1">
    <location>
        <begin position="7"/>
        <end position="12"/>
    </location>
    <ligand>
        <name>substrate</name>
    </ligand>
</feature>
<feature type="binding site" evidence="1">
    <location>
        <position position="38"/>
    </location>
    <ligand>
        <name>Mg(2+)</name>
        <dbReference type="ChEBI" id="CHEBI:18420"/>
    </ligand>
</feature>
<feature type="binding site" evidence="1">
    <location>
        <position position="74"/>
    </location>
    <ligand>
        <name>Mg(2+)</name>
        <dbReference type="ChEBI" id="CHEBI:18420"/>
    </ligand>
</feature>
<feature type="binding site" evidence="1">
    <location>
        <position position="75"/>
    </location>
    <ligand>
        <name>substrate</name>
    </ligand>
</feature>
<feature type="binding site" evidence="1">
    <location>
        <begin position="156"/>
        <end position="159"/>
    </location>
    <ligand>
        <name>substrate</name>
    </ligand>
</feature>
<feature type="binding site" evidence="1">
    <location>
        <position position="179"/>
    </location>
    <ligand>
        <name>substrate</name>
    </ligand>
</feature>
<feature type="binding site" evidence="1">
    <location>
        <begin position="184"/>
        <end position="185"/>
    </location>
    <ligand>
        <name>substrate</name>
    </ligand>
</feature>
<sequence>MKIVLATNNKDKVKEIKAFYDGYEIYALNEICEPFEIDETGSSFKENALIKATAVYAKLCALKLENEFIALSDDSGISVEALGFAPGIYSARYSGKDATDASNRKKLTCELHKLRLKKSGAFYTACIAVASKFGNFSTHGFMYGTVIDEERGDNGFGYDFMFMPDGFDGTIGQLDVKTKLAISHRSKGLELAKYILNSLEKYYK</sequence>
<name>IXTPA_CAMFF</name>
<reference key="1">
    <citation type="submission" date="2006-11" db="EMBL/GenBank/DDBJ databases">
        <title>Sequence of Campylobacter fetus subsp. fetus 82-40.</title>
        <authorList>
            <person name="Fouts D.E."/>
            <person name="Nelson K.E."/>
        </authorList>
    </citation>
    <scope>NUCLEOTIDE SEQUENCE [LARGE SCALE GENOMIC DNA]</scope>
    <source>
        <strain>82-40</strain>
    </source>
</reference>
<gene>
    <name type="ordered locus">CFF8240_0274</name>
</gene>
<keyword id="KW-0378">Hydrolase</keyword>
<keyword id="KW-0460">Magnesium</keyword>
<keyword id="KW-0479">Metal-binding</keyword>
<keyword id="KW-0546">Nucleotide metabolism</keyword>
<keyword id="KW-0547">Nucleotide-binding</keyword>
<comment type="function">
    <text evidence="1">Pyrophosphatase that catalyzes the hydrolysis of nucleoside triphosphates to their monophosphate derivatives, with a high preference for the non-canonical purine nucleotides XTP (xanthosine triphosphate), dITP (deoxyinosine triphosphate) and ITP. Seems to function as a house-cleaning enzyme that removes non-canonical purine nucleotides from the nucleotide pool, thus preventing their incorporation into DNA/RNA and avoiding chromosomal lesions.</text>
</comment>
<comment type="catalytic activity">
    <reaction evidence="1">
        <text>XTP + H2O = XMP + diphosphate + H(+)</text>
        <dbReference type="Rhea" id="RHEA:28610"/>
        <dbReference type="ChEBI" id="CHEBI:15377"/>
        <dbReference type="ChEBI" id="CHEBI:15378"/>
        <dbReference type="ChEBI" id="CHEBI:33019"/>
        <dbReference type="ChEBI" id="CHEBI:57464"/>
        <dbReference type="ChEBI" id="CHEBI:61314"/>
        <dbReference type="EC" id="3.6.1.66"/>
    </reaction>
</comment>
<comment type="catalytic activity">
    <reaction evidence="1">
        <text>dITP + H2O = dIMP + diphosphate + H(+)</text>
        <dbReference type="Rhea" id="RHEA:28342"/>
        <dbReference type="ChEBI" id="CHEBI:15377"/>
        <dbReference type="ChEBI" id="CHEBI:15378"/>
        <dbReference type="ChEBI" id="CHEBI:33019"/>
        <dbReference type="ChEBI" id="CHEBI:61194"/>
        <dbReference type="ChEBI" id="CHEBI:61382"/>
        <dbReference type="EC" id="3.6.1.66"/>
    </reaction>
</comment>
<comment type="catalytic activity">
    <reaction evidence="1">
        <text>ITP + H2O = IMP + diphosphate + H(+)</text>
        <dbReference type="Rhea" id="RHEA:29399"/>
        <dbReference type="ChEBI" id="CHEBI:15377"/>
        <dbReference type="ChEBI" id="CHEBI:15378"/>
        <dbReference type="ChEBI" id="CHEBI:33019"/>
        <dbReference type="ChEBI" id="CHEBI:58053"/>
        <dbReference type="ChEBI" id="CHEBI:61402"/>
        <dbReference type="EC" id="3.6.1.66"/>
    </reaction>
</comment>
<comment type="cofactor">
    <cofactor evidence="1">
        <name>Mg(2+)</name>
        <dbReference type="ChEBI" id="CHEBI:18420"/>
    </cofactor>
    <text evidence="1">Binds 1 Mg(2+) ion per subunit.</text>
</comment>
<comment type="subunit">
    <text evidence="1">Homodimer.</text>
</comment>
<comment type="similarity">
    <text evidence="1">Belongs to the HAM1 NTPase family.</text>
</comment>
<organism>
    <name type="scientific">Campylobacter fetus subsp. fetus (strain 82-40)</name>
    <dbReference type="NCBI Taxonomy" id="360106"/>
    <lineage>
        <taxon>Bacteria</taxon>
        <taxon>Pseudomonadati</taxon>
        <taxon>Campylobacterota</taxon>
        <taxon>Epsilonproteobacteria</taxon>
        <taxon>Campylobacterales</taxon>
        <taxon>Campylobacteraceae</taxon>
        <taxon>Campylobacter</taxon>
    </lineage>
</organism>
<dbReference type="EC" id="3.6.1.66" evidence="1"/>
<dbReference type="EMBL" id="CP000487">
    <property type="protein sequence ID" value="ABK83193.1"/>
    <property type="molecule type" value="Genomic_DNA"/>
</dbReference>
<dbReference type="RefSeq" id="WP_002848364.1">
    <property type="nucleotide sequence ID" value="NC_008599.1"/>
</dbReference>
<dbReference type="SMR" id="A0RMP5"/>
<dbReference type="KEGG" id="cff:CFF8240_0274"/>
<dbReference type="eggNOG" id="COG0127">
    <property type="taxonomic scope" value="Bacteria"/>
</dbReference>
<dbReference type="HOGENOM" id="CLU_082080_0_2_7"/>
<dbReference type="Proteomes" id="UP000000760">
    <property type="component" value="Chromosome"/>
</dbReference>
<dbReference type="GO" id="GO:0005829">
    <property type="term" value="C:cytosol"/>
    <property type="evidence" value="ECO:0007669"/>
    <property type="project" value="TreeGrafter"/>
</dbReference>
<dbReference type="GO" id="GO:0035870">
    <property type="term" value="F:dITP diphosphatase activity"/>
    <property type="evidence" value="ECO:0007669"/>
    <property type="project" value="RHEA"/>
</dbReference>
<dbReference type="GO" id="GO:0036220">
    <property type="term" value="F:ITP diphosphatase activity"/>
    <property type="evidence" value="ECO:0007669"/>
    <property type="project" value="UniProtKB-EC"/>
</dbReference>
<dbReference type="GO" id="GO:0046872">
    <property type="term" value="F:metal ion binding"/>
    <property type="evidence" value="ECO:0007669"/>
    <property type="project" value="UniProtKB-KW"/>
</dbReference>
<dbReference type="GO" id="GO:0000166">
    <property type="term" value="F:nucleotide binding"/>
    <property type="evidence" value="ECO:0007669"/>
    <property type="project" value="UniProtKB-KW"/>
</dbReference>
<dbReference type="GO" id="GO:0017111">
    <property type="term" value="F:ribonucleoside triphosphate phosphatase activity"/>
    <property type="evidence" value="ECO:0007669"/>
    <property type="project" value="InterPro"/>
</dbReference>
<dbReference type="GO" id="GO:0036222">
    <property type="term" value="F:XTP diphosphatase activity"/>
    <property type="evidence" value="ECO:0007669"/>
    <property type="project" value="RHEA"/>
</dbReference>
<dbReference type="GO" id="GO:0009117">
    <property type="term" value="P:nucleotide metabolic process"/>
    <property type="evidence" value="ECO:0007669"/>
    <property type="project" value="UniProtKB-KW"/>
</dbReference>
<dbReference type="GO" id="GO:0009146">
    <property type="term" value="P:purine nucleoside triphosphate catabolic process"/>
    <property type="evidence" value="ECO:0007669"/>
    <property type="project" value="UniProtKB-UniRule"/>
</dbReference>
<dbReference type="CDD" id="cd00515">
    <property type="entry name" value="HAM1"/>
    <property type="match status" value="1"/>
</dbReference>
<dbReference type="Gene3D" id="3.90.950.10">
    <property type="match status" value="1"/>
</dbReference>
<dbReference type="HAMAP" id="MF_01405">
    <property type="entry name" value="Non_canon_purine_NTPase"/>
    <property type="match status" value="1"/>
</dbReference>
<dbReference type="InterPro" id="IPR020922">
    <property type="entry name" value="dITP/XTP_pyrophosphatase"/>
</dbReference>
<dbReference type="InterPro" id="IPR029001">
    <property type="entry name" value="ITPase-like_fam"/>
</dbReference>
<dbReference type="InterPro" id="IPR002637">
    <property type="entry name" value="RdgB/HAM1"/>
</dbReference>
<dbReference type="PANTHER" id="PTHR11067:SF9">
    <property type="entry name" value="INOSINE TRIPHOSPHATE PYROPHOSPHATASE"/>
    <property type="match status" value="1"/>
</dbReference>
<dbReference type="PANTHER" id="PTHR11067">
    <property type="entry name" value="INOSINE TRIPHOSPHATE PYROPHOSPHATASE/HAM1 PROTEIN"/>
    <property type="match status" value="1"/>
</dbReference>
<dbReference type="Pfam" id="PF01725">
    <property type="entry name" value="Ham1p_like"/>
    <property type="match status" value="1"/>
</dbReference>
<dbReference type="SUPFAM" id="SSF52972">
    <property type="entry name" value="ITPase-like"/>
    <property type="match status" value="1"/>
</dbReference>
<protein>
    <recommendedName>
        <fullName evidence="1">dITP/XTP pyrophosphatase</fullName>
        <ecNumber evidence="1">3.6.1.66</ecNumber>
    </recommendedName>
    <alternativeName>
        <fullName evidence="1">Non-canonical purine NTP pyrophosphatase</fullName>
    </alternativeName>
    <alternativeName>
        <fullName evidence="1">Non-standard purine NTP pyrophosphatase</fullName>
    </alternativeName>
    <alternativeName>
        <fullName evidence="1">Nucleoside-triphosphate diphosphatase</fullName>
    </alternativeName>
    <alternativeName>
        <fullName evidence="1">Nucleoside-triphosphate pyrophosphatase</fullName>
        <shortName evidence="1">NTPase</shortName>
    </alternativeName>
</protein>